<name>YDZA_SCHPO</name>
<organism>
    <name type="scientific">Schizosaccharomyces pombe (strain 972 / ATCC 24843)</name>
    <name type="common">Fission yeast</name>
    <dbReference type="NCBI Taxonomy" id="284812"/>
    <lineage>
        <taxon>Eukaryota</taxon>
        <taxon>Fungi</taxon>
        <taxon>Dikarya</taxon>
        <taxon>Ascomycota</taxon>
        <taxon>Taphrinomycotina</taxon>
        <taxon>Schizosaccharomycetes</taxon>
        <taxon>Schizosaccharomycetales</taxon>
        <taxon>Schizosaccharomycetaceae</taxon>
        <taxon>Schizosaccharomyces</taxon>
    </lineage>
</organism>
<proteinExistence type="predicted"/>
<gene>
    <name type="ORF">SPAC14C4.10c</name>
</gene>
<evidence type="ECO:0000255" key="1"/>
<evidence type="ECO:0000255" key="2">
    <source>
        <dbReference type="PROSITE-ProRule" id="PRU00794"/>
    </source>
</evidence>
<evidence type="ECO:0000305" key="3"/>
<dbReference type="EMBL" id="CU329670">
    <property type="protein sequence ID" value="CAB11203.1"/>
    <property type="molecule type" value="Genomic_DNA"/>
</dbReference>
<dbReference type="PIR" id="T37695">
    <property type="entry name" value="T37695"/>
</dbReference>
<dbReference type="RefSeq" id="NP_594915.1">
    <property type="nucleotide sequence ID" value="NM_001020347.2"/>
</dbReference>
<dbReference type="SMR" id="O13717"/>
<dbReference type="BioGRID" id="277927">
    <property type="interactions" value="3"/>
</dbReference>
<dbReference type="STRING" id="284812.O13717"/>
<dbReference type="SwissPalm" id="O13717"/>
<dbReference type="PaxDb" id="4896-SPAC14C4.10c.1"/>
<dbReference type="EnsemblFungi" id="SPAC14C4.10c.1">
    <property type="protein sequence ID" value="SPAC14C4.10c.1:pep"/>
    <property type="gene ID" value="SPAC14C4.10c"/>
</dbReference>
<dbReference type="KEGG" id="spo:2541421"/>
<dbReference type="PomBase" id="SPAC14C4.10c"/>
<dbReference type="VEuPathDB" id="FungiDB:SPAC14C4.10c"/>
<dbReference type="eggNOG" id="KOG3069">
    <property type="taxonomic scope" value="Eukaryota"/>
</dbReference>
<dbReference type="HOGENOM" id="CLU_845090_0_0_1"/>
<dbReference type="InParanoid" id="O13717"/>
<dbReference type="OMA" id="LLWGITH"/>
<dbReference type="PhylomeDB" id="O13717"/>
<dbReference type="PRO" id="PR:O13717"/>
<dbReference type="Proteomes" id="UP000002485">
    <property type="component" value="Chromosome I"/>
</dbReference>
<dbReference type="GO" id="GO:0005783">
    <property type="term" value="C:endoplasmic reticulum"/>
    <property type="evidence" value="ECO:0007005"/>
    <property type="project" value="PomBase"/>
</dbReference>
<dbReference type="GO" id="GO:0005794">
    <property type="term" value="C:Golgi apparatus"/>
    <property type="evidence" value="ECO:0007005"/>
    <property type="project" value="PomBase"/>
</dbReference>
<dbReference type="GO" id="GO:0016020">
    <property type="term" value="C:membrane"/>
    <property type="evidence" value="ECO:0007669"/>
    <property type="project" value="UniProtKB-SubCell"/>
</dbReference>
<dbReference type="GO" id="GO:0010945">
    <property type="term" value="F:coenzyme A diphosphatase activity"/>
    <property type="evidence" value="ECO:0007669"/>
    <property type="project" value="InterPro"/>
</dbReference>
<dbReference type="CDD" id="cd03426">
    <property type="entry name" value="NUDIX_CoAse_Nudt7"/>
    <property type="match status" value="1"/>
</dbReference>
<dbReference type="Gene3D" id="3.90.79.10">
    <property type="entry name" value="Nucleoside Triphosphate Pyrophosphohydrolase"/>
    <property type="match status" value="1"/>
</dbReference>
<dbReference type="InterPro" id="IPR045121">
    <property type="entry name" value="CoAse"/>
</dbReference>
<dbReference type="InterPro" id="IPR015797">
    <property type="entry name" value="NUDIX_hydrolase-like_dom_sf"/>
</dbReference>
<dbReference type="InterPro" id="IPR000086">
    <property type="entry name" value="NUDIX_hydrolase_dom"/>
</dbReference>
<dbReference type="PANTHER" id="PTHR12992">
    <property type="entry name" value="NUDIX HYDROLASE"/>
    <property type="match status" value="1"/>
</dbReference>
<dbReference type="PANTHER" id="PTHR12992:SF44">
    <property type="entry name" value="NUDIX HYDROLASE DOMAIN-CONTAINING PROTEIN"/>
    <property type="match status" value="1"/>
</dbReference>
<dbReference type="Pfam" id="PF00293">
    <property type="entry name" value="NUDIX"/>
    <property type="match status" value="1"/>
</dbReference>
<dbReference type="SUPFAM" id="SSF55811">
    <property type="entry name" value="Nudix"/>
    <property type="match status" value="1"/>
</dbReference>
<dbReference type="PROSITE" id="PS51462">
    <property type="entry name" value="NUDIX"/>
    <property type="match status" value="1"/>
</dbReference>
<keyword id="KW-0472">Membrane</keyword>
<keyword id="KW-1185">Reference proteome</keyword>
<keyword id="KW-0812">Transmembrane</keyword>
<keyword id="KW-1133">Transmembrane helix</keyword>
<reference key="1">
    <citation type="journal article" date="2002" name="Nature">
        <title>The genome sequence of Schizosaccharomyces pombe.</title>
        <authorList>
            <person name="Wood V."/>
            <person name="Gwilliam R."/>
            <person name="Rajandream M.A."/>
            <person name="Lyne M.H."/>
            <person name="Lyne R."/>
            <person name="Stewart A."/>
            <person name="Sgouros J.G."/>
            <person name="Peat N."/>
            <person name="Hayles J."/>
            <person name="Baker S.G."/>
            <person name="Basham D."/>
            <person name="Bowman S."/>
            <person name="Brooks K."/>
            <person name="Brown D."/>
            <person name="Brown S."/>
            <person name="Chillingworth T."/>
            <person name="Churcher C.M."/>
            <person name="Collins M."/>
            <person name="Connor R."/>
            <person name="Cronin A."/>
            <person name="Davis P."/>
            <person name="Feltwell T."/>
            <person name="Fraser A."/>
            <person name="Gentles S."/>
            <person name="Goble A."/>
            <person name="Hamlin N."/>
            <person name="Harris D.E."/>
            <person name="Hidalgo J."/>
            <person name="Hodgson G."/>
            <person name="Holroyd S."/>
            <person name="Hornsby T."/>
            <person name="Howarth S."/>
            <person name="Huckle E.J."/>
            <person name="Hunt S."/>
            <person name="Jagels K."/>
            <person name="James K.D."/>
            <person name="Jones L."/>
            <person name="Jones M."/>
            <person name="Leather S."/>
            <person name="McDonald S."/>
            <person name="McLean J."/>
            <person name="Mooney P."/>
            <person name="Moule S."/>
            <person name="Mungall K.L."/>
            <person name="Murphy L.D."/>
            <person name="Niblett D."/>
            <person name="Odell C."/>
            <person name="Oliver K."/>
            <person name="O'Neil S."/>
            <person name="Pearson D."/>
            <person name="Quail M.A."/>
            <person name="Rabbinowitsch E."/>
            <person name="Rutherford K.M."/>
            <person name="Rutter S."/>
            <person name="Saunders D."/>
            <person name="Seeger K."/>
            <person name="Sharp S."/>
            <person name="Skelton J."/>
            <person name="Simmonds M.N."/>
            <person name="Squares R."/>
            <person name="Squares S."/>
            <person name="Stevens K."/>
            <person name="Taylor K."/>
            <person name="Taylor R.G."/>
            <person name="Tivey A."/>
            <person name="Walsh S.V."/>
            <person name="Warren T."/>
            <person name="Whitehead S."/>
            <person name="Woodward J.R."/>
            <person name="Volckaert G."/>
            <person name="Aert R."/>
            <person name="Robben J."/>
            <person name="Grymonprez B."/>
            <person name="Weltjens I."/>
            <person name="Vanstreels E."/>
            <person name="Rieger M."/>
            <person name="Schaefer M."/>
            <person name="Mueller-Auer S."/>
            <person name="Gabel C."/>
            <person name="Fuchs M."/>
            <person name="Duesterhoeft A."/>
            <person name="Fritzc C."/>
            <person name="Holzer E."/>
            <person name="Moestl D."/>
            <person name="Hilbert H."/>
            <person name="Borzym K."/>
            <person name="Langer I."/>
            <person name="Beck A."/>
            <person name="Lehrach H."/>
            <person name="Reinhardt R."/>
            <person name="Pohl T.M."/>
            <person name="Eger P."/>
            <person name="Zimmermann W."/>
            <person name="Wedler H."/>
            <person name="Wambutt R."/>
            <person name="Purnelle B."/>
            <person name="Goffeau A."/>
            <person name="Cadieu E."/>
            <person name="Dreano S."/>
            <person name="Gloux S."/>
            <person name="Lelaure V."/>
            <person name="Mottier S."/>
            <person name="Galibert F."/>
            <person name="Aves S.J."/>
            <person name="Xiang Z."/>
            <person name="Hunt C."/>
            <person name="Moore K."/>
            <person name="Hurst S.M."/>
            <person name="Lucas M."/>
            <person name="Rochet M."/>
            <person name="Gaillardin C."/>
            <person name="Tallada V.A."/>
            <person name="Garzon A."/>
            <person name="Thode G."/>
            <person name="Daga R.R."/>
            <person name="Cruzado L."/>
            <person name="Jimenez J."/>
            <person name="Sanchez M."/>
            <person name="del Rey F."/>
            <person name="Benito J."/>
            <person name="Dominguez A."/>
            <person name="Revuelta J.L."/>
            <person name="Moreno S."/>
            <person name="Armstrong J."/>
            <person name="Forsburg S.L."/>
            <person name="Cerutti L."/>
            <person name="Lowe T."/>
            <person name="McCombie W.R."/>
            <person name="Paulsen I."/>
            <person name="Potashkin J."/>
            <person name="Shpakovski G.V."/>
            <person name="Ussery D."/>
            <person name="Barrell B.G."/>
            <person name="Nurse P."/>
        </authorList>
    </citation>
    <scope>NUCLEOTIDE SEQUENCE [LARGE SCALE GENOMIC DNA]</scope>
    <source>
        <strain>972 / ATCC 24843</strain>
    </source>
</reference>
<feature type="chain" id="PRO_0000116685" description="Uncharacterized protein C14C4.10c">
    <location>
        <begin position="1"/>
        <end position="329"/>
    </location>
</feature>
<feature type="transmembrane region" description="Helical" evidence="1">
    <location>
        <begin position="123"/>
        <end position="143"/>
    </location>
</feature>
<feature type="transmembrane region" description="Helical" evidence="1">
    <location>
        <begin position="227"/>
        <end position="247"/>
    </location>
</feature>
<feature type="transmembrane region" description="Helical" evidence="1">
    <location>
        <begin position="303"/>
        <end position="323"/>
    </location>
</feature>
<feature type="domain" description="Nudix hydrolase" evidence="2">
    <location>
        <begin position="27"/>
        <end position="185"/>
    </location>
</feature>
<protein>
    <recommendedName>
        <fullName>Uncharacterized protein C14C4.10c</fullName>
    </recommendedName>
</protein>
<accession>O13717</accession>
<comment type="subcellular location">
    <subcellularLocation>
        <location evidence="3">Membrane</location>
        <topology evidence="3">Multi-pass membrane protein</topology>
    </subcellularLocation>
</comment>
<sequence length="329" mass="38294">MELELDLLTGLQLLSEYCPRVTPNAPPRRASVAVIIAFKESQDFSNPKWPQCIPITSVPYVLLIQRSFRDTDRWSGHMALPGGTRSLTDKSDIQTAHRETLEEVGIDLRKEHAHFVGALDERVITSNWGQFPLLLLSSFVFILPYMPSLRLQESEVFSAQWYPLADLLLPECQTRIQIDSSRALKKTYPRFIKTLFHLAVGNLMYSAIRLEFDPSSATYSLPPYQRPFLRGITHSIFVDLFIFLSPSSARHCLCWSLPYFQHYDLRFIASFFTQFYRLRLHQVYPRGNWVFTCLNGYYPYLKLTLLVGFLFRLFLVYLLFLIISAYYKS</sequence>